<gene>
    <name evidence="1" type="primary">aroK</name>
    <name type="ordered locus">TTE1275</name>
</gene>
<sequence>MKNIVLTGFMGTGKTTVGKKVATTLHFNFIDTDKLVEKMAGMSVAEIFEKHGEEYFRKLEKAAVIKASRLKNHVIATGGGVVLNPSNIVQLRKNGVIILLKARPEVILRNISKTKDRPLLAVEDPEKRIRELLEEREPFYRFADYTIDVSDKTIEEVAEEVIRAYIKLKGR</sequence>
<feature type="chain" id="PRO_0000237950" description="Shikimate kinase">
    <location>
        <begin position="1"/>
        <end position="171"/>
    </location>
</feature>
<feature type="binding site" evidence="1">
    <location>
        <begin position="11"/>
        <end position="16"/>
    </location>
    <ligand>
        <name>ATP</name>
        <dbReference type="ChEBI" id="CHEBI:30616"/>
    </ligand>
</feature>
<feature type="binding site" evidence="1">
    <location>
        <position position="15"/>
    </location>
    <ligand>
        <name>Mg(2+)</name>
        <dbReference type="ChEBI" id="CHEBI:18420"/>
    </ligand>
</feature>
<feature type="binding site" evidence="1">
    <location>
        <position position="33"/>
    </location>
    <ligand>
        <name>substrate</name>
    </ligand>
</feature>
<feature type="binding site" evidence="1">
    <location>
        <position position="57"/>
    </location>
    <ligand>
        <name>substrate</name>
    </ligand>
</feature>
<feature type="binding site" evidence="1">
    <location>
        <position position="79"/>
    </location>
    <ligand>
        <name>substrate</name>
    </ligand>
</feature>
<feature type="binding site" evidence="1">
    <location>
        <position position="117"/>
    </location>
    <ligand>
        <name>ATP</name>
        <dbReference type="ChEBI" id="CHEBI:30616"/>
    </ligand>
</feature>
<feature type="binding site" evidence="1">
    <location>
        <position position="136"/>
    </location>
    <ligand>
        <name>substrate</name>
    </ligand>
</feature>
<reference key="1">
    <citation type="journal article" date="2002" name="Genome Res.">
        <title>A complete sequence of the T. tengcongensis genome.</title>
        <authorList>
            <person name="Bao Q."/>
            <person name="Tian Y."/>
            <person name="Li W."/>
            <person name="Xu Z."/>
            <person name="Xuan Z."/>
            <person name="Hu S."/>
            <person name="Dong W."/>
            <person name="Yang J."/>
            <person name="Chen Y."/>
            <person name="Xue Y."/>
            <person name="Xu Y."/>
            <person name="Lai X."/>
            <person name="Huang L."/>
            <person name="Dong X."/>
            <person name="Ma Y."/>
            <person name="Ling L."/>
            <person name="Tan H."/>
            <person name="Chen R."/>
            <person name="Wang J."/>
            <person name="Yu J."/>
            <person name="Yang H."/>
        </authorList>
    </citation>
    <scope>NUCLEOTIDE SEQUENCE [LARGE SCALE GENOMIC DNA]</scope>
    <source>
        <strain>DSM 15242 / JCM 11007 / NBRC 100824 / MB4</strain>
    </source>
</reference>
<name>AROK_CALS4</name>
<organism>
    <name type="scientific">Caldanaerobacter subterraneus subsp. tengcongensis (strain DSM 15242 / JCM 11007 / NBRC 100824 / MB4)</name>
    <name type="common">Thermoanaerobacter tengcongensis</name>
    <dbReference type="NCBI Taxonomy" id="273068"/>
    <lineage>
        <taxon>Bacteria</taxon>
        <taxon>Bacillati</taxon>
        <taxon>Bacillota</taxon>
        <taxon>Clostridia</taxon>
        <taxon>Thermoanaerobacterales</taxon>
        <taxon>Thermoanaerobacteraceae</taxon>
        <taxon>Caldanaerobacter</taxon>
    </lineage>
</organism>
<keyword id="KW-0028">Amino-acid biosynthesis</keyword>
<keyword id="KW-0057">Aromatic amino acid biosynthesis</keyword>
<keyword id="KW-0067">ATP-binding</keyword>
<keyword id="KW-0963">Cytoplasm</keyword>
<keyword id="KW-0418">Kinase</keyword>
<keyword id="KW-0460">Magnesium</keyword>
<keyword id="KW-0479">Metal-binding</keyword>
<keyword id="KW-0547">Nucleotide-binding</keyword>
<keyword id="KW-1185">Reference proteome</keyword>
<keyword id="KW-0808">Transferase</keyword>
<comment type="function">
    <text evidence="1">Catalyzes the specific phosphorylation of the 3-hydroxyl group of shikimic acid using ATP as a cosubstrate.</text>
</comment>
<comment type="catalytic activity">
    <reaction evidence="1">
        <text>shikimate + ATP = 3-phosphoshikimate + ADP + H(+)</text>
        <dbReference type="Rhea" id="RHEA:13121"/>
        <dbReference type="ChEBI" id="CHEBI:15378"/>
        <dbReference type="ChEBI" id="CHEBI:30616"/>
        <dbReference type="ChEBI" id="CHEBI:36208"/>
        <dbReference type="ChEBI" id="CHEBI:145989"/>
        <dbReference type="ChEBI" id="CHEBI:456216"/>
        <dbReference type="EC" id="2.7.1.71"/>
    </reaction>
</comment>
<comment type="cofactor">
    <cofactor evidence="1">
        <name>Mg(2+)</name>
        <dbReference type="ChEBI" id="CHEBI:18420"/>
    </cofactor>
    <text evidence="1">Binds 1 Mg(2+) ion per subunit.</text>
</comment>
<comment type="pathway">
    <text evidence="1">Metabolic intermediate biosynthesis; chorismate biosynthesis; chorismate from D-erythrose 4-phosphate and phosphoenolpyruvate: step 5/7.</text>
</comment>
<comment type="subunit">
    <text evidence="1">Monomer.</text>
</comment>
<comment type="subcellular location">
    <subcellularLocation>
        <location evidence="1">Cytoplasm</location>
    </subcellularLocation>
</comment>
<comment type="similarity">
    <text evidence="1">Belongs to the shikimate kinase family.</text>
</comment>
<protein>
    <recommendedName>
        <fullName evidence="1">Shikimate kinase</fullName>
        <shortName evidence="1">SK</shortName>
        <ecNumber evidence="1">2.7.1.71</ecNumber>
    </recommendedName>
</protein>
<dbReference type="EC" id="2.7.1.71" evidence="1"/>
<dbReference type="EMBL" id="AE008691">
    <property type="protein sequence ID" value="AAM24499.1"/>
    <property type="molecule type" value="Genomic_DNA"/>
</dbReference>
<dbReference type="RefSeq" id="WP_011025591.1">
    <property type="nucleotide sequence ID" value="NC_003869.1"/>
</dbReference>
<dbReference type="SMR" id="Q8RAE8"/>
<dbReference type="STRING" id="273068.TTE1275"/>
<dbReference type="KEGG" id="tte:TTE1275"/>
<dbReference type="eggNOG" id="COG0703">
    <property type="taxonomic scope" value="Bacteria"/>
</dbReference>
<dbReference type="HOGENOM" id="CLU_057607_4_0_9"/>
<dbReference type="OrthoDB" id="9800332at2"/>
<dbReference type="UniPathway" id="UPA00053">
    <property type="reaction ID" value="UER00088"/>
</dbReference>
<dbReference type="Proteomes" id="UP000000555">
    <property type="component" value="Chromosome"/>
</dbReference>
<dbReference type="GO" id="GO:0005829">
    <property type="term" value="C:cytosol"/>
    <property type="evidence" value="ECO:0007669"/>
    <property type="project" value="TreeGrafter"/>
</dbReference>
<dbReference type="GO" id="GO:0005524">
    <property type="term" value="F:ATP binding"/>
    <property type="evidence" value="ECO:0007669"/>
    <property type="project" value="UniProtKB-UniRule"/>
</dbReference>
<dbReference type="GO" id="GO:0000287">
    <property type="term" value="F:magnesium ion binding"/>
    <property type="evidence" value="ECO:0007669"/>
    <property type="project" value="UniProtKB-UniRule"/>
</dbReference>
<dbReference type="GO" id="GO:0004765">
    <property type="term" value="F:shikimate kinase activity"/>
    <property type="evidence" value="ECO:0007669"/>
    <property type="project" value="UniProtKB-UniRule"/>
</dbReference>
<dbReference type="GO" id="GO:0008652">
    <property type="term" value="P:amino acid biosynthetic process"/>
    <property type="evidence" value="ECO:0007669"/>
    <property type="project" value="UniProtKB-KW"/>
</dbReference>
<dbReference type="GO" id="GO:0009073">
    <property type="term" value="P:aromatic amino acid family biosynthetic process"/>
    <property type="evidence" value="ECO:0007669"/>
    <property type="project" value="UniProtKB-KW"/>
</dbReference>
<dbReference type="GO" id="GO:0009423">
    <property type="term" value="P:chorismate biosynthetic process"/>
    <property type="evidence" value="ECO:0007669"/>
    <property type="project" value="UniProtKB-UniRule"/>
</dbReference>
<dbReference type="CDD" id="cd00464">
    <property type="entry name" value="SK"/>
    <property type="match status" value="1"/>
</dbReference>
<dbReference type="Gene3D" id="3.40.50.300">
    <property type="entry name" value="P-loop containing nucleotide triphosphate hydrolases"/>
    <property type="match status" value="1"/>
</dbReference>
<dbReference type="HAMAP" id="MF_00109">
    <property type="entry name" value="Shikimate_kinase"/>
    <property type="match status" value="1"/>
</dbReference>
<dbReference type="InterPro" id="IPR027417">
    <property type="entry name" value="P-loop_NTPase"/>
</dbReference>
<dbReference type="InterPro" id="IPR031322">
    <property type="entry name" value="Shikimate/glucono_kinase"/>
</dbReference>
<dbReference type="InterPro" id="IPR000623">
    <property type="entry name" value="Shikimate_kinase/TSH1"/>
</dbReference>
<dbReference type="InterPro" id="IPR023000">
    <property type="entry name" value="Shikimate_kinase_CS"/>
</dbReference>
<dbReference type="NCBIfam" id="NF010553">
    <property type="entry name" value="PRK13947.1"/>
    <property type="match status" value="1"/>
</dbReference>
<dbReference type="PANTHER" id="PTHR21087">
    <property type="entry name" value="SHIKIMATE KINASE"/>
    <property type="match status" value="1"/>
</dbReference>
<dbReference type="PANTHER" id="PTHR21087:SF16">
    <property type="entry name" value="SHIKIMATE KINASE 1, CHLOROPLASTIC"/>
    <property type="match status" value="1"/>
</dbReference>
<dbReference type="Pfam" id="PF01202">
    <property type="entry name" value="SKI"/>
    <property type="match status" value="1"/>
</dbReference>
<dbReference type="PRINTS" id="PR01100">
    <property type="entry name" value="SHIKIMTKNASE"/>
</dbReference>
<dbReference type="SUPFAM" id="SSF52540">
    <property type="entry name" value="P-loop containing nucleoside triphosphate hydrolases"/>
    <property type="match status" value="1"/>
</dbReference>
<dbReference type="PROSITE" id="PS01128">
    <property type="entry name" value="SHIKIMATE_KINASE"/>
    <property type="match status" value="1"/>
</dbReference>
<evidence type="ECO:0000255" key="1">
    <source>
        <dbReference type="HAMAP-Rule" id="MF_00109"/>
    </source>
</evidence>
<proteinExistence type="inferred from homology"/>
<accession>Q8RAE8</accession>